<keyword id="KW-0012">Acyltransferase</keyword>
<keyword id="KW-0963">Cytoplasm</keyword>
<keyword id="KW-0408">Iron</keyword>
<keyword id="KW-0479">Metal-binding</keyword>
<keyword id="KW-0808">Transferase</keyword>
<keyword id="KW-0819">tRNA processing</keyword>
<sequence length="363" mass="37206">MSHPLTFLGIESSCDDTAAAVVRAAERAEILSSVVDGQAALHAPFGGVVPEIAARAHAERLDLCVERALQEAGLGLGDLDGIAVTAGPGLIGGVLSGVMLAKGLAAGTGLPLVGVNHLAGHALTPRLTDALAFPYLMLLVSGGHCQFLIARGAEAFSRLGGSIDDAPGEAFDKTAKLLGLPQPGGPSVEAEAATGDPRRFAFPRPMLDRPGCDMSFSGLKTALLRARDGIVAEKGGITRQDRADLCAGFQAAVVDVLAEKTRRALAIYAEEQAPVPALAVAGGVAANGPIRAALTRVAEEAGARFLAPPLRLCTDNAAMIAWAGIERFRAGGRDGMDLQARPRWPLDQSAPALIGSGRKGAKA</sequence>
<comment type="function">
    <text evidence="1">Required for the formation of a threonylcarbamoyl group on adenosine at position 37 (t(6)A37) in tRNAs that read codons beginning with adenine. Is involved in the transfer of the threonylcarbamoyl moiety of threonylcarbamoyl-AMP (TC-AMP) to the N6 group of A37, together with TsaE and TsaB. TsaD likely plays a direct catalytic role in this reaction.</text>
</comment>
<comment type="catalytic activity">
    <reaction evidence="1">
        <text>L-threonylcarbamoyladenylate + adenosine(37) in tRNA = N(6)-L-threonylcarbamoyladenosine(37) in tRNA + AMP + H(+)</text>
        <dbReference type="Rhea" id="RHEA:37059"/>
        <dbReference type="Rhea" id="RHEA-COMP:10162"/>
        <dbReference type="Rhea" id="RHEA-COMP:10163"/>
        <dbReference type="ChEBI" id="CHEBI:15378"/>
        <dbReference type="ChEBI" id="CHEBI:73682"/>
        <dbReference type="ChEBI" id="CHEBI:74411"/>
        <dbReference type="ChEBI" id="CHEBI:74418"/>
        <dbReference type="ChEBI" id="CHEBI:456215"/>
        <dbReference type="EC" id="2.3.1.234"/>
    </reaction>
</comment>
<comment type="cofactor">
    <cofactor evidence="1">
        <name>Fe(2+)</name>
        <dbReference type="ChEBI" id="CHEBI:29033"/>
    </cofactor>
    <text evidence="1">Binds 1 Fe(2+) ion per subunit.</text>
</comment>
<comment type="subcellular location">
    <subcellularLocation>
        <location evidence="1">Cytoplasm</location>
    </subcellularLocation>
</comment>
<comment type="similarity">
    <text evidence="1">Belongs to the KAE1 / TsaD family.</text>
</comment>
<name>TSAD_CERS5</name>
<evidence type="ECO:0000255" key="1">
    <source>
        <dbReference type="HAMAP-Rule" id="MF_01445"/>
    </source>
</evidence>
<proteinExistence type="inferred from homology"/>
<organism>
    <name type="scientific">Cereibacter sphaeroides (strain ATCC 17025 / ATH 2.4.3)</name>
    <name type="common">Rhodobacter sphaeroides</name>
    <dbReference type="NCBI Taxonomy" id="349102"/>
    <lineage>
        <taxon>Bacteria</taxon>
        <taxon>Pseudomonadati</taxon>
        <taxon>Pseudomonadota</taxon>
        <taxon>Alphaproteobacteria</taxon>
        <taxon>Rhodobacterales</taxon>
        <taxon>Paracoccaceae</taxon>
        <taxon>Cereibacter</taxon>
    </lineage>
</organism>
<gene>
    <name evidence="1" type="primary">tsaD</name>
    <name type="synonym">gcp</name>
    <name type="ordered locus">Rsph17025_2914</name>
</gene>
<feature type="chain" id="PRO_1000024443" description="tRNA N6-adenosine threonylcarbamoyltransferase">
    <location>
        <begin position="1"/>
        <end position="363"/>
    </location>
</feature>
<feature type="binding site" evidence="1">
    <location>
        <position position="117"/>
    </location>
    <ligand>
        <name>Fe cation</name>
        <dbReference type="ChEBI" id="CHEBI:24875"/>
    </ligand>
</feature>
<feature type="binding site" evidence="1">
    <location>
        <position position="121"/>
    </location>
    <ligand>
        <name>Fe cation</name>
        <dbReference type="ChEBI" id="CHEBI:24875"/>
    </ligand>
</feature>
<feature type="binding site" evidence="1">
    <location>
        <begin position="139"/>
        <end position="143"/>
    </location>
    <ligand>
        <name>substrate</name>
    </ligand>
</feature>
<feature type="binding site" evidence="1">
    <location>
        <position position="172"/>
    </location>
    <ligand>
        <name>substrate</name>
    </ligand>
</feature>
<feature type="binding site" evidence="1">
    <location>
        <position position="185"/>
    </location>
    <ligand>
        <name>substrate</name>
    </ligand>
</feature>
<feature type="binding site" evidence="1">
    <location>
        <position position="287"/>
    </location>
    <ligand>
        <name>substrate</name>
    </ligand>
</feature>
<feature type="binding site" evidence="1">
    <location>
        <position position="315"/>
    </location>
    <ligand>
        <name>Fe cation</name>
        <dbReference type="ChEBI" id="CHEBI:24875"/>
    </ligand>
</feature>
<reference key="1">
    <citation type="submission" date="2007-04" db="EMBL/GenBank/DDBJ databases">
        <title>Complete sequence of chromosome of Rhodobacter sphaeroides ATCC 17025.</title>
        <authorList>
            <consortium name="US DOE Joint Genome Institute"/>
            <person name="Copeland A."/>
            <person name="Lucas S."/>
            <person name="Lapidus A."/>
            <person name="Barry K."/>
            <person name="Detter J.C."/>
            <person name="Glavina del Rio T."/>
            <person name="Hammon N."/>
            <person name="Israni S."/>
            <person name="Dalin E."/>
            <person name="Tice H."/>
            <person name="Pitluck S."/>
            <person name="Chertkov O."/>
            <person name="Brettin T."/>
            <person name="Bruce D."/>
            <person name="Han C."/>
            <person name="Schmutz J."/>
            <person name="Larimer F."/>
            <person name="Land M."/>
            <person name="Hauser L."/>
            <person name="Kyrpides N."/>
            <person name="Kim E."/>
            <person name="Richardson P."/>
            <person name="Mackenzie C."/>
            <person name="Choudhary M."/>
            <person name="Donohue T.J."/>
            <person name="Kaplan S."/>
        </authorList>
    </citation>
    <scope>NUCLEOTIDE SEQUENCE [LARGE SCALE GENOMIC DNA]</scope>
    <source>
        <strain>ATCC 17025 / ATH 2.4.3</strain>
    </source>
</reference>
<accession>A4WWN6</accession>
<protein>
    <recommendedName>
        <fullName evidence="1">tRNA N6-adenosine threonylcarbamoyltransferase</fullName>
        <ecNumber evidence="1">2.3.1.234</ecNumber>
    </recommendedName>
    <alternativeName>
        <fullName evidence="1">N6-L-threonylcarbamoyladenine synthase</fullName>
        <shortName evidence="1">t(6)A synthase</shortName>
    </alternativeName>
    <alternativeName>
        <fullName evidence="1">t(6)A37 threonylcarbamoyladenosine biosynthesis protein TsaD</fullName>
    </alternativeName>
    <alternativeName>
        <fullName evidence="1">tRNA threonylcarbamoyladenosine biosynthesis protein TsaD</fullName>
    </alternativeName>
</protein>
<dbReference type="EC" id="2.3.1.234" evidence="1"/>
<dbReference type="EMBL" id="CP000661">
    <property type="protein sequence ID" value="ABP71800.1"/>
    <property type="molecule type" value="Genomic_DNA"/>
</dbReference>
<dbReference type="SMR" id="A4WWN6"/>
<dbReference type="STRING" id="349102.Rsph17025_2914"/>
<dbReference type="KEGG" id="rsq:Rsph17025_2914"/>
<dbReference type="eggNOG" id="COG0533">
    <property type="taxonomic scope" value="Bacteria"/>
</dbReference>
<dbReference type="HOGENOM" id="CLU_023208_0_2_5"/>
<dbReference type="BioCyc" id="RSPH349102:G1G8M-3010-MONOMER"/>
<dbReference type="GO" id="GO:0005737">
    <property type="term" value="C:cytoplasm"/>
    <property type="evidence" value="ECO:0007669"/>
    <property type="project" value="UniProtKB-SubCell"/>
</dbReference>
<dbReference type="GO" id="GO:0005506">
    <property type="term" value="F:iron ion binding"/>
    <property type="evidence" value="ECO:0007669"/>
    <property type="project" value="UniProtKB-UniRule"/>
</dbReference>
<dbReference type="GO" id="GO:0061711">
    <property type="term" value="F:N(6)-L-threonylcarbamoyladenine synthase activity"/>
    <property type="evidence" value="ECO:0007669"/>
    <property type="project" value="UniProtKB-EC"/>
</dbReference>
<dbReference type="GO" id="GO:0002949">
    <property type="term" value="P:tRNA threonylcarbamoyladenosine modification"/>
    <property type="evidence" value="ECO:0007669"/>
    <property type="project" value="UniProtKB-UniRule"/>
</dbReference>
<dbReference type="FunFam" id="3.30.420.40:FF:000012">
    <property type="entry name" value="tRNA N6-adenosine threonylcarbamoyltransferase"/>
    <property type="match status" value="1"/>
</dbReference>
<dbReference type="FunFam" id="3.30.420.40:FF:000040">
    <property type="entry name" value="tRNA N6-adenosine threonylcarbamoyltransferase"/>
    <property type="match status" value="1"/>
</dbReference>
<dbReference type="Gene3D" id="3.30.420.40">
    <property type="match status" value="2"/>
</dbReference>
<dbReference type="HAMAP" id="MF_01445">
    <property type="entry name" value="TsaD"/>
    <property type="match status" value="1"/>
</dbReference>
<dbReference type="InterPro" id="IPR043129">
    <property type="entry name" value="ATPase_NBD"/>
</dbReference>
<dbReference type="InterPro" id="IPR000905">
    <property type="entry name" value="Gcp-like_dom"/>
</dbReference>
<dbReference type="InterPro" id="IPR017861">
    <property type="entry name" value="KAE1/TsaD"/>
</dbReference>
<dbReference type="InterPro" id="IPR022450">
    <property type="entry name" value="TsaD"/>
</dbReference>
<dbReference type="NCBIfam" id="TIGR00329">
    <property type="entry name" value="gcp_kae1"/>
    <property type="match status" value="1"/>
</dbReference>
<dbReference type="NCBIfam" id="TIGR03723">
    <property type="entry name" value="T6A_TsaD_YgjD"/>
    <property type="match status" value="1"/>
</dbReference>
<dbReference type="PANTHER" id="PTHR11735">
    <property type="entry name" value="TRNA N6-ADENOSINE THREONYLCARBAMOYLTRANSFERASE"/>
    <property type="match status" value="1"/>
</dbReference>
<dbReference type="PANTHER" id="PTHR11735:SF6">
    <property type="entry name" value="TRNA N6-ADENOSINE THREONYLCARBAMOYLTRANSFERASE, MITOCHONDRIAL"/>
    <property type="match status" value="1"/>
</dbReference>
<dbReference type="Pfam" id="PF00814">
    <property type="entry name" value="TsaD"/>
    <property type="match status" value="1"/>
</dbReference>
<dbReference type="PRINTS" id="PR00789">
    <property type="entry name" value="OSIALOPTASE"/>
</dbReference>
<dbReference type="SUPFAM" id="SSF53067">
    <property type="entry name" value="Actin-like ATPase domain"/>
    <property type="match status" value="2"/>
</dbReference>